<feature type="signal peptide" evidence="1">
    <location>
        <begin position="1"/>
        <end position="40"/>
    </location>
</feature>
<feature type="chain" id="PRO_0000436658" description="Envelope glycoprotein H" evidence="1">
    <location>
        <begin position="41"/>
        <end position="806"/>
    </location>
</feature>
<feature type="topological domain" description="Virion surface" evidence="1">
    <location>
        <begin position="41"/>
        <end position="764"/>
    </location>
</feature>
<feature type="transmembrane region" description="Helical" evidence="1">
    <location>
        <begin position="765"/>
        <end position="785"/>
    </location>
</feature>
<feature type="topological domain" description="Intravirion" evidence="1">
    <location>
        <begin position="786"/>
        <end position="806"/>
    </location>
</feature>
<feature type="glycosylation site" description="N-linked (GlcNAc...) asparagine; by host" evidence="1">
    <location>
        <position position="88"/>
    </location>
</feature>
<feature type="glycosylation site" description="N-linked (GlcNAc...) asparagine; by host" evidence="1">
    <location>
        <position position="267"/>
    </location>
</feature>
<feature type="glycosylation site" description="N-linked (GlcNAc...) asparagine; by host" evidence="1">
    <location>
        <position position="659"/>
    </location>
</feature>
<feature type="glycosylation site" description="N-linked (GlcNAc...) asparagine; by host" evidence="1">
    <location>
        <position position="723"/>
    </location>
</feature>
<sequence>MVTPRSAVPAARPLAARRLASVAWACAALLALVALQCATATKDIVTMHATRNSLIPKDTLTVAVVMIDSYDNRLVFHANKNLLFGASNTSARALAEAYNLLGEVYVTYAYYRWARDDRPVAVGRPAPDYVLGTRLLSGPGSQKIKPPEERPSFPLSGSLRGKSLLMPRKVIFNDPLQTLMPFVFTRYLSITLSGYWDISVNSGKNVFSLCVSSPATPPVEVIATPRSAKLRESRFPQWPRYLYVSSSETSVLVNVAAGTSYKPRLYNATLAGVKAFLEVQNYGSHVAAGQLLTIKQLLKHGCNREPDEPFVVAAALHFGAAWHRFAALAAETYVTDAEILEFVVTTETWAKQVELCFSANAPQLGAAPPASRLAILSGRGGADEGLINVPYAILQVSRERYWGEVRSVNEQLTILTAILGSVDRLGAAAYLPSADGVAPHAFAASIIDSYYHKLIRGSATDKIDRKTLSAAVRVFLARKADSIPTARRVLTHMTVLCSEHQAQNPLVDITGTIDAASGHGEIFCLDDLFTPCAAALRFDLEPQANRPSGNVISASAVYRTLYGSFLYGGSELETAALLDDSARVIAAAQPVGGPKAYADMFFPELARCFDWTRENSIVFYIAISDSASWILTTRPVTGGVRYRLPDTSIRTNLYLTYFNASCSKEPFASRVEKITSGYVNLHGASIACKLCGHALLRYSLGGFEDVFVIRTADEERQMTMGANSSIQYFRAMDPTYFNYILMDSSGSALRVLAFTHGSYAVDKNYIIGIAVGSLAGVFAVAFAARSIYKFYRGRANRYTLLTNDYD</sequence>
<organismHost>
    <name type="scientific">Amazona oratrix</name>
    <name type="common">yellow-headed parrot</name>
    <dbReference type="NCBI Taxonomy" id="152276"/>
</organismHost>
<dbReference type="EMBL" id="AY372243">
    <property type="protein sequence ID" value="AAQ73700.1"/>
    <property type="molecule type" value="Genomic_DNA"/>
</dbReference>
<dbReference type="RefSeq" id="NP_944394.1">
    <property type="nucleotide sequence ID" value="NC_005264.1"/>
</dbReference>
<dbReference type="SMR" id="Q6UDL0"/>
<dbReference type="GlyCosmos" id="Q6UDL0">
    <property type="glycosylation" value="4 sites, No reported glycans"/>
</dbReference>
<dbReference type="GeneID" id="2656961"/>
<dbReference type="KEGG" id="vg:2656961"/>
<dbReference type="Proteomes" id="UP000006840">
    <property type="component" value="Segment"/>
</dbReference>
<dbReference type="GO" id="GO:0044175">
    <property type="term" value="C:host cell endosome membrane"/>
    <property type="evidence" value="ECO:0007669"/>
    <property type="project" value="UniProtKB-SubCell"/>
</dbReference>
<dbReference type="GO" id="GO:0020002">
    <property type="term" value="C:host cell plasma membrane"/>
    <property type="evidence" value="ECO:0007669"/>
    <property type="project" value="UniProtKB-SubCell"/>
</dbReference>
<dbReference type="GO" id="GO:0016020">
    <property type="term" value="C:membrane"/>
    <property type="evidence" value="ECO:0007669"/>
    <property type="project" value="UniProtKB-KW"/>
</dbReference>
<dbReference type="GO" id="GO:0019031">
    <property type="term" value="C:viral envelope"/>
    <property type="evidence" value="ECO:0007669"/>
    <property type="project" value="UniProtKB-KW"/>
</dbReference>
<dbReference type="GO" id="GO:0055036">
    <property type="term" value="C:virion membrane"/>
    <property type="evidence" value="ECO:0007669"/>
    <property type="project" value="UniProtKB-SubCell"/>
</dbReference>
<dbReference type="GO" id="GO:0019064">
    <property type="term" value="P:fusion of virus membrane with host plasma membrane"/>
    <property type="evidence" value="ECO:0007669"/>
    <property type="project" value="UniProtKB-KW"/>
</dbReference>
<dbReference type="GO" id="GO:0046718">
    <property type="term" value="P:symbiont entry into host cell"/>
    <property type="evidence" value="ECO:0007669"/>
    <property type="project" value="UniProtKB-KW"/>
</dbReference>
<dbReference type="Gene3D" id="1.20.58.1340">
    <property type="match status" value="1"/>
</dbReference>
<dbReference type="Gene3D" id="2.60.40.3190">
    <property type="entry name" value="Herpesvirus glycoprotein H, C-terminal domain"/>
    <property type="match status" value="1"/>
</dbReference>
<dbReference type="HAMAP" id="MF_04033">
    <property type="entry name" value="HSV_GH"/>
    <property type="match status" value="1"/>
</dbReference>
<dbReference type="InterPro" id="IPR003493">
    <property type="entry name" value="Herpes_gH"/>
</dbReference>
<dbReference type="InterPro" id="IPR035305">
    <property type="entry name" value="Herpes_glycoH_C"/>
</dbReference>
<dbReference type="InterPro" id="IPR038172">
    <property type="entry name" value="Herpes_glycoH_C_sf"/>
</dbReference>
<dbReference type="Pfam" id="PF17488">
    <property type="entry name" value="Herpes_glycoH_C"/>
    <property type="match status" value="1"/>
</dbReference>
<keyword id="KW-1169">Fusion of virus membrane with host cell membrane</keyword>
<keyword id="KW-1168">Fusion of virus membrane with host membrane</keyword>
<keyword id="KW-0325">Glycoprotein</keyword>
<keyword id="KW-1032">Host cell membrane</keyword>
<keyword id="KW-1039">Host endosome</keyword>
<keyword id="KW-1043">Host membrane</keyword>
<keyword id="KW-0472">Membrane</keyword>
<keyword id="KW-1185">Reference proteome</keyword>
<keyword id="KW-0730">Sialic acid</keyword>
<keyword id="KW-0732">Signal</keyword>
<keyword id="KW-0812">Transmembrane</keyword>
<keyword id="KW-1133">Transmembrane helix</keyword>
<keyword id="KW-0261">Viral envelope protein</keyword>
<keyword id="KW-1162">Viral penetration into host cytoplasm</keyword>
<keyword id="KW-0946">Virion</keyword>
<keyword id="KW-1160">Virus entry into host cell</keyword>
<gene>
    <name evidence="1" type="primary">gH</name>
    <name type="ORF">UL22</name>
</gene>
<accession>Q6UDL0</accession>
<comment type="function">
    <text evidence="1">The heterodimer glycoprotein H-glycoprotein L is required for the fusion of viral and plasma membranes leading to virus entry into the host cell. Following initial binding to host receptor, membrane fusion is mediated by the fusion machinery composed of gB and the heterodimer gH/gL. May also be involved in the fusion between the virion envelope and the outer nuclear membrane during virion morphogenesis.</text>
</comment>
<comment type="subunit">
    <text evidence="1">Interacts with glycoprotein L (gL); this interaction is necessary for the correct processing and cell surface expression of gH. The heterodimer gH/gL seems to interact with gB trimers during fusion.</text>
</comment>
<comment type="subcellular location">
    <subcellularLocation>
        <location evidence="1">Virion membrane</location>
        <topology evidence="1">Single-pass type I membrane protein</topology>
    </subcellularLocation>
    <subcellularLocation>
        <location evidence="1">Host cell membrane</location>
        <topology evidence="1">Single-pass type I membrane protein</topology>
    </subcellularLocation>
    <subcellularLocation>
        <location evidence="1">Host endosome membrane</location>
        <topology evidence="1">Single-pass type I membrane protein</topology>
    </subcellularLocation>
    <text evidence="1">During virion morphogenesis, this protein probably accumulates in the endosomes and trans-Golgi where secondary envelopment occurs. It is probably transported to the cell surface from where it is endocytosed and directed to the trans-Golgi network (TGN).</text>
</comment>
<comment type="PTM">
    <text evidence="1">N-glycosylated, O-glycosylated, and sialylated.</text>
</comment>
<comment type="similarity">
    <text evidence="1">Belongs to the herpesviridae glycoprotein H family.</text>
</comment>
<reference key="1">
    <citation type="journal article" date="2006" name="J. Virol.">
        <title>Psittacid herpesvirus 1 and infectious laryngotracheitis virus: Comparative genome sequence analysis of two avian alphaherpesviruses.</title>
        <authorList>
            <person name="Thureen D.R."/>
            <person name="Keeler C.L. Jr."/>
        </authorList>
    </citation>
    <scope>NUCLEOTIDE SEQUENCE [LARGE SCALE GENOMIC DNA]</scope>
</reference>
<organism>
    <name type="scientific">Psittacid herpesvirus 1 (isolate Amazon parrot/-/97-0001/1997)</name>
    <name type="common">PsHV-1</name>
    <name type="synonym">Pacheco's disease virus</name>
    <dbReference type="NCBI Taxonomy" id="670426"/>
    <lineage>
        <taxon>Viruses</taxon>
        <taxon>Duplodnaviria</taxon>
        <taxon>Heunggongvirae</taxon>
        <taxon>Peploviricota</taxon>
        <taxon>Herviviricetes</taxon>
        <taxon>Herpesvirales</taxon>
        <taxon>Orthoherpesviridae</taxon>
        <taxon>Alphaherpesvirinae</taxon>
        <taxon>Iltovirus</taxon>
        <taxon>Iltovirus psittacidalpha1</taxon>
        <taxon>Psittacid alphaherpesvirus 1</taxon>
    </lineage>
</organism>
<protein>
    <recommendedName>
        <fullName evidence="1">Envelope glycoprotein H</fullName>
        <shortName evidence="1">gH</shortName>
    </recommendedName>
</protein>
<evidence type="ECO:0000255" key="1">
    <source>
        <dbReference type="HAMAP-Rule" id="MF_04033"/>
    </source>
</evidence>
<proteinExistence type="inferred from homology"/>
<name>GH_PSHV1</name>